<organism>
    <name type="scientific">Archaeoglobus fulgidus (strain ATCC 49558 / DSM 4304 / JCM 9628 / NBRC 100126 / VC-16)</name>
    <dbReference type="NCBI Taxonomy" id="224325"/>
    <lineage>
        <taxon>Archaea</taxon>
        <taxon>Methanobacteriati</taxon>
        <taxon>Methanobacteriota</taxon>
        <taxon>Archaeoglobi</taxon>
        <taxon>Archaeoglobales</taxon>
        <taxon>Archaeoglobaceae</taxon>
        <taxon>Archaeoglobus</taxon>
    </lineage>
</organism>
<sequence>MAKQMEKKSARLLAFLLALIMIGSVFAYMLSGGSAEHREVVYRLDDFREYVNWTPADPVYVQYYNLSYTSKLGSKDPLASMVTTDLQKLLIPAIFSRQVLEVTRGISQVMIVDFGETVPLYFVDAGMSKIYFAKEDEIKHGNFTLQVRRPGIALVSELSPLVVGYKPLVEKAVDTVEGNYPSFGNKTYSYLSRINGSFAYAFFAYGDVVKQWIRVGNESPADFFFEGYRYNFNNSSYEKVWAMHFEGNYFFGGMNESEKNFEYYKVQNFGDGLSVAVMEDKNFTKVVNARPNILTWQISFNNTQNES</sequence>
<gene>
    <name type="ordered locus">AF_2048</name>
</gene>
<reference key="1">
    <citation type="journal article" date="1997" name="Nature">
        <title>The complete genome sequence of the hyperthermophilic, sulphate-reducing archaeon Archaeoglobus fulgidus.</title>
        <authorList>
            <person name="Klenk H.-P."/>
            <person name="Clayton R.A."/>
            <person name="Tomb J.-F."/>
            <person name="White O."/>
            <person name="Nelson K.E."/>
            <person name="Ketchum K.A."/>
            <person name="Dodson R.J."/>
            <person name="Gwinn M.L."/>
            <person name="Hickey E.K."/>
            <person name="Peterson J.D."/>
            <person name="Richardson D.L."/>
            <person name="Kerlavage A.R."/>
            <person name="Graham D.E."/>
            <person name="Kyrpides N.C."/>
            <person name="Fleischmann R.D."/>
            <person name="Quackenbush J."/>
            <person name="Lee N.H."/>
            <person name="Sutton G.G."/>
            <person name="Gill S.R."/>
            <person name="Kirkness E.F."/>
            <person name="Dougherty B.A."/>
            <person name="McKenney K."/>
            <person name="Adams M.D."/>
            <person name="Loftus B.J."/>
            <person name="Peterson S.N."/>
            <person name="Reich C.I."/>
            <person name="McNeil L.K."/>
            <person name="Badger J.H."/>
            <person name="Glodek A."/>
            <person name="Zhou L."/>
            <person name="Overbeek R."/>
            <person name="Gocayne J.D."/>
            <person name="Weidman J.F."/>
            <person name="McDonald L.A."/>
            <person name="Utterback T.R."/>
            <person name="Cotton M.D."/>
            <person name="Spriggs T."/>
            <person name="Artiach P."/>
            <person name="Kaine B.P."/>
            <person name="Sykes S.M."/>
            <person name="Sadow P.W."/>
            <person name="D'Andrea K.P."/>
            <person name="Bowman C."/>
            <person name="Fujii C."/>
            <person name="Garland S.A."/>
            <person name="Mason T.M."/>
            <person name="Olsen G.J."/>
            <person name="Fraser C.M."/>
            <person name="Smith H.O."/>
            <person name="Woese C.R."/>
            <person name="Venter J.C."/>
        </authorList>
    </citation>
    <scope>NUCLEOTIDE SEQUENCE [LARGE SCALE GENOMIC DNA]</scope>
    <source>
        <strain>ATCC 49558 / DSM 4304 / JCM 9628 / NBRC 100126 / VC-16</strain>
    </source>
</reference>
<protein>
    <recommendedName>
        <fullName>Uncharacterized protein AF_2048</fullName>
    </recommendedName>
</protein>
<evidence type="ECO:0000255" key="1"/>
<evidence type="ECO:0000305" key="2"/>
<accession>O28231</accession>
<keyword id="KW-0472">Membrane</keyword>
<keyword id="KW-1185">Reference proteome</keyword>
<keyword id="KW-0812">Transmembrane</keyword>
<keyword id="KW-1133">Transmembrane helix</keyword>
<name>Y2048_ARCFU</name>
<proteinExistence type="predicted"/>
<feature type="chain" id="PRO_0000128087" description="Uncharacterized protein AF_2048">
    <location>
        <begin position="1"/>
        <end position="307"/>
    </location>
</feature>
<feature type="transmembrane region" description="Helical" evidence="1">
    <location>
        <begin position="12"/>
        <end position="34"/>
    </location>
</feature>
<dbReference type="EMBL" id="AE000782">
    <property type="protein sequence ID" value="AAB89212.1"/>
    <property type="molecule type" value="Genomic_DNA"/>
</dbReference>
<dbReference type="PIR" id="G69505">
    <property type="entry name" value="G69505"/>
</dbReference>
<dbReference type="RefSeq" id="WP_010879540.1">
    <property type="nucleotide sequence ID" value="NC_000917.1"/>
</dbReference>
<dbReference type="STRING" id="224325.AF_2048"/>
<dbReference type="PaxDb" id="224325-AF_2048"/>
<dbReference type="EnsemblBacteria" id="AAB89212">
    <property type="protein sequence ID" value="AAB89212"/>
    <property type="gene ID" value="AF_2048"/>
</dbReference>
<dbReference type="GeneID" id="1485275"/>
<dbReference type="KEGG" id="afu:AF_2048"/>
<dbReference type="eggNOG" id="arCOG04912">
    <property type="taxonomic scope" value="Archaea"/>
</dbReference>
<dbReference type="HOGENOM" id="CLU_958466_0_0_2"/>
<dbReference type="OrthoDB" id="50519at2157"/>
<dbReference type="Proteomes" id="UP000002199">
    <property type="component" value="Chromosome"/>
</dbReference>
<dbReference type="GO" id="GO:0016020">
    <property type="term" value="C:membrane"/>
    <property type="evidence" value="ECO:0007669"/>
    <property type="project" value="UniProtKB-SubCell"/>
</dbReference>
<comment type="subcellular location">
    <subcellularLocation>
        <location evidence="2">Membrane</location>
        <topology evidence="2">Single-pass membrane protein</topology>
    </subcellularLocation>
</comment>